<sequence length="37" mass="4305">MKVRPSVKPICEKCKVIRRKGKVMVICENPKHKQKQG</sequence>
<feature type="chain" id="PRO_1000003401" description="Large ribosomal subunit protein bL36">
    <location>
        <begin position="1"/>
        <end position="37"/>
    </location>
</feature>
<comment type="similarity">
    <text evidence="1">Belongs to the bacterial ribosomal protein bL36 family.</text>
</comment>
<keyword id="KW-1185">Reference proteome</keyword>
<keyword id="KW-0687">Ribonucleoprotein</keyword>
<keyword id="KW-0689">Ribosomal protein</keyword>
<protein>
    <recommendedName>
        <fullName evidence="1">Large ribosomal subunit protein bL36</fullName>
    </recommendedName>
    <alternativeName>
        <fullName evidence="2">50S ribosomal protein L36</fullName>
    </alternativeName>
</protein>
<name>RL36_CLOBH</name>
<accession>A5I7I1</accession>
<accession>A7G8R3</accession>
<gene>
    <name evidence="1" type="primary">rpmJ</name>
    <name type="ordered locus">CBO3456</name>
    <name type="ordered locus">CLC_3400</name>
</gene>
<reference key="1">
    <citation type="journal article" date="2007" name="Genome Res.">
        <title>Genome sequence of a proteolytic (Group I) Clostridium botulinum strain Hall A and comparative analysis of the clostridial genomes.</title>
        <authorList>
            <person name="Sebaihia M."/>
            <person name="Peck M.W."/>
            <person name="Minton N.P."/>
            <person name="Thomson N.R."/>
            <person name="Holden M.T.G."/>
            <person name="Mitchell W.J."/>
            <person name="Carter A.T."/>
            <person name="Bentley S.D."/>
            <person name="Mason D.R."/>
            <person name="Crossman L."/>
            <person name="Paul C.J."/>
            <person name="Ivens A."/>
            <person name="Wells-Bennik M.H.J."/>
            <person name="Davis I.J."/>
            <person name="Cerdeno-Tarraga A.M."/>
            <person name="Churcher C."/>
            <person name="Quail M.A."/>
            <person name="Chillingworth T."/>
            <person name="Feltwell T."/>
            <person name="Fraser A."/>
            <person name="Goodhead I."/>
            <person name="Hance Z."/>
            <person name="Jagels K."/>
            <person name="Larke N."/>
            <person name="Maddison M."/>
            <person name="Moule S."/>
            <person name="Mungall K."/>
            <person name="Norbertczak H."/>
            <person name="Rabbinowitsch E."/>
            <person name="Sanders M."/>
            <person name="Simmonds M."/>
            <person name="White B."/>
            <person name="Whithead S."/>
            <person name="Parkhill J."/>
        </authorList>
    </citation>
    <scope>NUCLEOTIDE SEQUENCE [LARGE SCALE GENOMIC DNA]</scope>
    <source>
        <strain>Hall / ATCC 3502 / NCTC 13319 / Type A</strain>
    </source>
</reference>
<reference key="2">
    <citation type="journal article" date="2007" name="PLoS ONE">
        <title>Analysis of the neurotoxin complex genes in Clostridium botulinum A1-A4 and B1 strains: BoNT/A3, /Ba4 and /B1 clusters are located within plasmids.</title>
        <authorList>
            <person name="Smith T.J."/>
            <person name="Hill K.K."/>
            <person name="Foley B.T."/>
            <person name="Detter J.C."/>
            <person name="Munk A.C."/>
            <person name="Bruce D.C."/>
            <person name="Doggett N.A."/>
            <person name="Smith L.A."/>
            <person name="Marks J.D."/>
            <person name="Xie G."/>
            <person name="Brettin T.S."/>
        </authorList>
    </citation>
    <scope>NUCLEOTIDE SEQUENCE [LARGE SCALE GENOMIC DNA]</scope>
    <source>
        <strain>Hall / ATCC 3502 / NCTC 13319 / Type A</strain>
    </source>
</reference>
<dbReference type="EMBL" id="CP000727">
    <property type="protein sequence ID" value="ABS35998.1"/>
    <property type="molecule type" value="Genomic_DNA"/>
</dbReference>
<dbReference type="EMBL" id="AM412317">
    <property type="protein sequence ID" value="CAL85016.1"/>
    <property type="molecule type" value="Genomic_DNA"/>
</dbReference>
<dbReference type="RefSeq" id="WP_003156543.1">
    <property type="nucleotide sequence ID" value="NC_009698.1"/>
</dbReference>
<dbReference type="RefSeq" id="YP_001255937.1">
    <property type="nucleotide sequence ID" value="NC_009495.1"/>
</dbReference>
<dbReference type="RefSeq" id="YP_001389178.1">
    <property type="nucleotide sequence ID" value="NC_009698.1"/>
</dbReference>
<dbReference type="SMR" id="A5I7I1"/>
<dbReference type="GeneID" id="97412846"/>
<dbReference type="KEGG" id="cbh:CLC_3400"/>
<dbReference type="KEGG" id="cbo:CBO3456"/>
<dbReference type="PATRIC" id="fig|413999.7.peg.3432"/>
<dbReference type="HOGENOM" id="CLU_135723_6_2_9"/>
<dbReference type="PRO" id="PR:A5I7I1"/>
<dbReference type="Proteomes" id="UP000001986">
    <property type="component" value="Chromosome"/>
</dbReference>
<dbReference type="GO" id="GO:0005737">
    <property type="term" value="C:cytoplasm"/>
    <property type="evidence" value="ECO:0007669"/>
    <property type="project" value="UniProtKB-ARBA"/>
</dbReference>
<dbReference type="GO" id="GO:1990904">
    <property type="term" value="C:ribonucleoprotein complex"/>
    <property type="evidence" value="ECO:0007669"/>
    <property type="project" value="UniProtKB-KW"/>
</dbReference>
<dbReference type="GO" id="GO:0005840">
    <property type="term" value="C:ribosome"/>
    <property type="evidence" value="ECO:0007669"/>
    <property type="project" value="UniProtKB-KW"/>
</dbReference>
<dbReference type="GO" id="GO:0003735">
    <property type="term" value="F:structural constituent of ribosome"/>
    <property type="evidence" value="ECO:0007669"/>
    <property type="project" value="InterPro"/>
</dbReference>
<dbReference type="GO" id="GO:0006412">
    <property type="term" value="P:translation"/>
    <property type="evidence" value="ECO:0007669"/>
    <property type="project" value="UniProtKB-UniRule"/>
</dbReference>
<dbReference type="HAMAP" id="MF_00251">
    <property type="entry name" value="Ribosomal_bL36"/>
    <property type="match status" value="1"/>
</dbReference>
<dbReference type="InterPro" id="IPR000473">
    <property type="entry name" value="Ribosomal_bL36"/>
</dbReference>
<dbReference type="InterPro" id="IPR035977">
    <property type="entry name" value="Ribosomal_bL36_sp"/>
</dbReference>
<dbReference type="NCBIfam" id="TIGR01022">
    <property type="entry name" value="rpmJ_bact"/>
    <property type="match status" value="1"/>
</dbReference>
<dbReference type="PANTHER" id="PTHR42888">
    <property type="entry name" value="50S RIBOSOMAL PROTEIN L36, CHLOROPLASTIC"/>
    <property type="match status" value="1"/>
</dbReference>
<dbReference type="PANTHER" id="PTHR42888:SF1">
    <property type="entry name" value="LARGE RIBOSOMAL SUBUNIT PROTEIN BL36C"/>
    <property type="match status" value="1"/>
</dbReference>
<dbReference type="Pfam" id="PF00444">
    <property type="entry name" value="Ribosomal_L36"/>
    <property type="match status" value="1"/>
</dbReference>
<dbReference type="SUPFAM" id="SSF57840">
    <property type="entry name" value="Ribosomal protein L36"/>
    <property type="match status" value="1"/>
</dbReference>
<dbReference type="PROSITE" id="PS00828">
    <property type="entry name" value="RIBOSOMAL_L36"/>
    <property type="match status" value="1"/>
</dbReference>
<proteinExistence type="inferred from homology"/>
<evidence type="ECO:0000255" key="1">
    <source>
        <dbReference type="HAMAP-Rule" id="MF_00251"/>
    </source>
</evidence>
<evidence type="ECO:0000305" key="2"/>
<organism>
    <name type="scientific">Clostridium botulinum (strain Hall / ATCC 3502 / NCTC 13319 / Type A)</name>
    <dbReference type="NCBI Taxonomy" id="441771"/>
    <lineage>
        <taxon>Bacteria</taxon>
        <taxon>Bacillati</taxon>
        <taxon>Bacillota</taxon>
        <taxon>Clostridia</taxon>
        <taxon>Eubacteriales</taxon>
        <taxon>Clostridiaceae</taxon>
        <taxon>Clostridium</taxon>
    </lineage>
</organism>